<sequence>MVERAKILEAVTTAIEKAPKRKFSESIDITINLKNIDMAQPKNRIDETILLPNGTGEKTGICVIGRGDIVTQAKDAKVDLILGPDEVERLGGAPREARRVASSYKYFLAETAVMPQVGRFLGPRLGPRGRMPMPIPGQTDIRPIVERLRNSVKIRTKDKTVFSTKVGSTAMTPEQVSENIDAILKRVESVLEQGHLNVRSVFVKTTMGPSVRLV</sequence>
<protein>
    <recommendedName>
        <fullName evidence="1">Large ribosomal subunit protein uL1</fullName>
    </recommendedName>
    <alternativeName>
        <fullName evidence="2">50S ribosomal protein L1</fullName>
    </alternativeName>
</protein>
<keyword id="KW-1185">Reference proteome</keyword>
<keyword id="KW-0678">Repressor</keyword>
<keyword id="KW-0687">Ribonucleoprotein</keyword>
<keyword id="KW-0689">Ribosomal protein</keyword>
<keyword id="KW-0694">RNA-binding</keyword>
<keyword id="KW-0699">rRNA-binding</keyword>
<keyword id="KW-0810">Translation regulation</keyword>
<keyword id="KW-0820">tRNA-binding</keyword>
<dbReference type="EMBL" id="CP000780">
    <property type="protein sequence ID" value="ABS56765.1"/>
    <property type="molecule type" value="Genomic_DNA"/>
</dbReference>
<dbReference type="RefSeq" id="WP_012107825.1">
    <property type="nucleotide sequence ID" value="NC_009712.1"/>
</dbReference>
<dbReference type="SMR" id="A7IAK4"/>
<dbReference type="STRING" id="456442.Mboo_2251"/>
<dbReference type="GeneID" id="5409939"/>
<dbReference type="KEGG" id="mbn:Mboo_2251"/>
<dbReference type="eggNOG" id="arCOG04289">
    <property type="taxonomic scope" value="Archaea"/>
</dbReference>
<dbReference type="HOGENOM" id="CLU_062853_4_0_2"/>
<dbReference type="OrthoDB" id="10382at2157"/>
<dbReference type="Proteomes" id="UP000002408">
    <property type="component" value="Chromosome"/>
</dbReference>
<dbReference type="GO" id="GO:0015934">
    <property type="term" value="C:large ribosomal subunit"/>
    <property type="evidence" value="ECO:0007669"/>
    <property type="project" value="InterPro"/>
</dbReference>
<dbReference type="GO" id="GO:0019843">
    <property type="term" value="F:rRNA binding"/>
    <property type="evidence" value="ECO:0007669"/>
    <property type="project" value="UniProtKB-UniRule"/>
</dbReference>
<dbReference type="GO" id="GO:0003735">
    <property type="term" value="F:structural constituent of ribosome"/>
    <property type="evidence" value="ECO:0007669"/>
    <property type="project" value="InterPro"/>
</dbReference>
<dbReference type="GO" id="GO:0000049">
    <property type="term" value="F:tRNA binding"/>
    <property type="evidence" value="ECO:0007669"/>
    <property type="project" value="UniProtKB-KW"/>
</dbReference>
<dbReference type="GO" id="GO:0006417">
    <property type="term" value="P:regulation of translation"/>
    <property type="evidence" value="ECO:0007669"/>
    <property type="project" value="UniProtKB-KW"/>
</dbReference>
<dbReference type="GO" id="GO:0006412">
    <property type="term" value="P:translation"/>
    <property type="evidence" value="ECO:0007669"/>
    <property type="project" value="UniProtKB-UniRule"/>
</dbReference>
<dbReference type="CDD" id="cd00403">
    <property type="entry name" value="Ribosomal_L1"/>
    <property type="match status" value="1"/>
</dbReference>
<dbReference type="FunFam" id="3.40.50.790:FF:000005">
    <property type="entry name" value="50S ribosomal protein L1"/>
    <property type="match status" value="1"/>
</dbReference>
<dbReference type="Gene3D" id="3.30.190.20">
    <property type="match status" value="1"/>
</dbReference>
<dbReference type="Gene3D" id="3.40.50.790">
    <property type="match status" value="1"/>
</dbReference>
<dbReference type="HAMAP" id="MF_01318_A">
    <property type="entry name" value="Ribosomal_uL1_A"/>
    <property type="match status" value="1"/>
</dbReference>
<dbReference type="InterPro" id="IPR002143">
    <property type="entry name" value="Ribosomal_uL1"/>
</dbReference>
<dbReference type="InterPro" id="IPR023674">
    <property type="entry name" value="Ribosomal_uL1-like"/>
</dbReference>
<dbReference type="InterPro" id="IPR028364">
    <property type="entry name" value="Ribosomal_uL1/biogenesis"/>
</dbReference>
<dbReference type="InterPro" id="IPR016095">
    <property type="entry name" value="Ribosomal_uL1_3-a/b-sand"/>
</dbReference>
<dbReference type="InterPro" id="IPR023669">
    <property type="entry name" value="Ribosomal_uL1_arc"/>
</dbReference>
<dbReference type="NCBIfam" id="NF003244">
    <property type="entry name" value="PRK04203.1"/>
    <property type="match status" value="1"/>
</dbReference>
<dbReference type="PANTHER" id="PTHR36427">
    <property type="entry name" value="54S RIBOSOMAL PROTEIN L1, MITOCHONDRIAL"/>
    <property type="match status" value="1"/>
</dbReference>
<dbReference type="PANTHER" id="PTHR36427:SF3">
    <property type="entry name" value="LARGE RIBOSOMAL SUBUNIT PROTEIN UL1M"/>
    <property type="match status" value="1"/>
</dbReference>
<dbReference type="Pfam" id="PF00687">
    <property type="entry name" value="Ribosomal_L1"/>
    <property type="match status" value="1"/>
</dbReference>
<dbReference type="PIRSF" id="PIRSF002155">
    <property type="entry name" value="Ribosomal_L1"/>
    <property type="match status" value="1"/>
</dbReference>
<dbReference type="SUPFAM" id="SSF56808">
    <property type="entry name" value="Ribosomal protein L1"/>
    <property type="match status" value="1"/>
</dbReference>
<organism>
    <name type="scientific">Methanoregula boonei (strain DSM 21154 / JCM 14090 / 6A8)</name>
    <dbReference type="NCBI Taxonomy" id="456442"/>
    <lineage>
        <taxon>Archaea</taxon>
        <taxon>Methanobacteriati</taxon>
        <taxon>Methanobacteriota</taxon>
        <taxon>Stenosarchaea group</taxon>
        <taxon>Methanomicrobia</taxon>
        <taxon>Methanomicrobiales</taxon>
        <taxon>Methanoregulaceae</taxon>
        <taxon>Methanoregula</taxon>
    </lineage>
</organism>
<feature type="chain" id="PRO_0000308148" description="Large ribosomal subunit protein uL1">
    <location>
        <begin position="1"/>
        <end position="214"/>
    </location>
</feature>
<accession>A7IAK4</accession>
<comment type="function">
    <text evidence="1">Binds directly to 23S rRNA. Probably involved in E site tRNA release.</text>
</comment>
<comment type="function">
    <text evidence="1">Protein L1 is also a translational repressor protein, it controls the translation of its operon by binding to its mRNA.</text>
</comment>
<comment type="subunit">
    <text evidence="1">Part of the 50S ribosomal subunit.</text>
</comment>
<comment type="similarity">
    <text evidence="1">Belongs to the universal ribosomal protein uL1 family.</text>
</comment>
<gene>
    <name evidence="1" type="primary">rpl1</name>
    <name type="ordered locus">Mboo_2251</name>
</gene>
<reference key="1">
    <citation type="journal article" date="2015" name="Microbiology">
        <title>Genome of Methanoregula boonei 6A8 reveals adaptations to oligotrophic peatland environments.</title>
        <authorList>
            <person name="Braeuer S."/>
            <person name="Cadillo-Quiroz H."/>
            <person name="Kyrpides N."/>
            <person name="Woyke T."/>
            <person name="Goodwin L."/>
            <person name="Detter C."/>
            <person name="Podell S."/>
            <person name="Yavitt J.B."/>
            <person name="Zinder S.H."/>
        </authorList>
    </citation>
    <scope>NUCLEOTIDE SEQUENCE [LARGE SCALE GENOMIC DNA]</scope>
    <source>
        <strain>DSM 21154 / JCM 14090 / 6A8</strain>
    </source>
</reference>
<proteinExistence type="inferred from homology"/>
<evidence type="ECO:0000255" key="1">
    <source>
        <dbReference type="HAMAP-Rule" id="MF_01318"/>
    </source>
</evidence>
<evidence type="ECO:0000305" key="2"/>
<name>RL1_METB6</name>